<gene>
    <name evidence="1" type="primary">purA</name>
    <name type="ordered locus">ECIAI1_4410</name>
</gene>
<name>PURA_ECO8A</name>
<sequence>MGNNVVVLGTQWGDEGKGKIVDLLTERAKYVVRYQGGHNAGHTLVINGEKTVLHLIPSGILRENVTSIIGNGVVLSPAALMKEMKELEDRGIPVRERLLLSEACPLILDYHVALDNAREKARGAKAIGTTGRGIGPAYEDKVARRGLRVGDLFDKETFAEKLKEVMEYHNFQLVNYYKAEAVDYQKVLDDTMAVADILTSMVVDVSDLLDQARQRGDFVMFEGAQGTLLDIDHGTYPYVTSSNTTAGGVATGSGLGPRYVDYVLGILKAYSTRVGAGPFPTELFDETGEFLCKQGNEFGATTGRRRRTGWLDTVAVRRAVQLNSLSGFCLTKLDVLDGLKEVKLCVAYRMPDGREVTTTPLAADDWKGVEPIYETMPGWSESTFGVKDRSGLPQAALNYIKRIEELTGVPIDIISTGPDRTETMILRDPFDA</sequence>
<dbReference type="EC" id="6.3.4.4" evidence="1"/>
<dbReference type="EMBL" id="CU928160">
    <property type="protein sequence ID" value="CAR01152.1"/>
    <property type="molecule type" value="Genomic_DNA"/>
</dbReference>
<dbReference type="RefSeq" id="WP_000527955.1">
    <property type="nucleotide sequence ID" value="NC_011741.1"/>
</dbReference>
<dbReference type="SMR" id="B7M8T7"/>
<dbReference type="GeneID" id="75202411"/>
<dbReference type="KEGG" id="ecr:ECIAI1_4410"/>
<dbReference type="HOGENOM" id="CLU_029848_0_0_6"/>
<dbReference type="UniPathway" id="UPA00075">
    <property type="reaction ID" value="UER00335"/>
</dbReference>
<dbReference type="GO" id="GO:0005737">
    <property type="term" value="C:cytoplasm"/>
    <property type="evidence" value="ECO:0007669"/>
    <property type="project" value="UniProtKB-SubCell"/>
</dbReference>
<dbReference type="GO" id="GO:0004019">
    <property type="term" value="F:adenylosuccinate synthase activity"/>
    <property type="evidence" value="ECO:0007669"/>
    <property type="project" value="UniProtKB-UniRule"/>
</dbReference>
<dbReference type="GO" id="GO:0005525">
    <property type="term" value="F:GTP binding"/>
    <property type="evidence" value="ECO:0007669"/>
    <property type="project" value="UniProtKB-UniRule"/>
</dbReference>
<dbReference type="GO" id="GO:0000287">
    <property type="term" value="F:magnesium ion binding"/>
    <property type="evidence" value="ECO:0007669"/>
    <property type="project" value="UniProtKB-UniRule"/>
</dbReference>
<dbReference type="GO" id="GO:0044208">
    <property type="term" value="P:'de novo' AMP biosynthetic process"/>
    <property type="evidence" value="ECO:0007669"/>
    <property type="project" value="UniProtKB-UniRule"/>
</dbReference>
<dbReference type="GO" id="GO:0046040">
    <property type="term" value="P:IMP metabolic process"/>
    <property type="evidence" value="ECO:0007669"/>
    <property type="project" value="TreeGrafter"/>
</dbReference>
<dbReference type="CDD" id="cd03108">
    <property type="entry name" value="AdSS"/>
    <property type="match status" value="1"/>
</dbReference>
<dbReference type="FunFam" id="1.10.300.10:FF:000001">
    <property type="entry name" value="Adenylosuccinate synthetase"/>
    <property type="match status" value="1"/>
</dbReference>
<dbReference type="FunFam" id="3.90.170.10:FF:000001">
    <property type="entry name" value="Adenylosuccinate synthetase"/>
    <property type="match status" value="1"/>
</dbReference>
<dbReference type="Gene3D" id="3.40.440.10">
    <property type="entry name" value="Adenylosuccinate Synthetase, subunit A, domain 1"/>
    <property type="match status" value="1"/>
</dbReference>
<dbReference type="Gene3D" id="1.10.300.10">
    <property type="entry name" value="Adenylosuccinate Synthetase, subunit A, domain 2"/>
    <property type="match status" value="1"/>
</dbReference>
<dbReference type="Gene3D" id="3.90.170.10">
    <property type="entry name" value="Adenylosuccinate Synthetase, subunit A, domain 3"/>
    <property type="match status" value="1"/>
</dbReference>
<dbReference type="HAMAP" id="MF_00011">
    <property type="entry name" value="Adenylosucc_synth"/>
    <property type="match status" value="1"/>
</dbReference>
<dbReference type="InterPro" id="IPR018220">
    <property type="entry name" value="Adenylosuccin_syn_GTP-bd"/>
</dbReference>
<dbReference type="InterPro" id="IPR033128">
    <property type="entry name" value="Adenylosuccin_syn_Lys_AS"/>
</dbReference>
<dbReference type="InterPro" id="IPR042109">
    <property type="entry name" value="Adenylosuccinate_synth_dom1"/>
</dbReference>
<dbReference type="InterPro" id="IPR042110">
    <property type="entry name" value="Adenylosuccinate_synth_dom2"/>
</dbReference>
<dbReference type="InterPro" id="IPR042111">
    <property type="entry name" value="Adenylosuccinate_synth_dom3"/>
</dbReference>
<dbReference type="InterPro" id="IPR001114">
    <property type="entry name" value="Adenylosuccinate_synthetase"/>
</dbReference>
<dbReference type="InterPro" id="IPR027417">
    <property type="entry name" value="P-loop_NTPase"/>
</dbReference>
<dbReference type="NCBIfam" id="NF002223">
    <property type="entry name" value="PRK01117.1"/>
    <property type="match status" value="1"/>
</dbReference>
<dbReference type="NCBIfam" id="TIGR00184">
    <property type="entry name" value="purA"/>
    <property type="match status" value="1"/>
</dbReference>
<dbReference type="PANTHER" id="PTHR11846">
    <property type="entry name" value="ADENYLOSUCCINATE SYNTHETASE"/>
    <property type="match status" value="1"/>
</dbReference>
<dbReference type="PANTHER" id="PTHR11846:SF0">
    <property type="entry name" value="ADENYLOSUCCINATE SYNTHETASE"/>
    <property type="match status" value="1"/>
</dbReference>
<dbReference type="Pfam" id="PF00709">
    <property type="entry name" value="Adenylsucc_synt"/>
    <property type="match status" value="1"/>
</dbReference>
<dbReference type="SMART" id="SM00788">
    <property type="entry name" value="Adenylsucc_synt"/>
    <property type="match status" value="1"/>
</dbReference>
<dbReference type="SUPFAM" id="SSF52540">
    <property type="entry name" value="P-loop containing nucleoside triphosphate hydrolases"/>
    <property type="match status" value="1"/>
</dbReference>
<dbReference type="PROSITE" id="PS01266">
    <property type="entry name" value="ADENYLOSUCCIN_SYN_1"/>
    <property type="match status" value="1"/>
</dbReference>
<dbReference type="PROSITE" id="PS00513">
    <property type="entry name" value="ADENYLOSUCCIN_SYN_2"/>
    <property type="match status" value="1"/>
</dbReference>
<organism>
    <name type="scientific">Escherichia coli O8 (strain IAI1)</name>
    <dbReference type="NCBI Taxonomy" id="585034"/>
    <lineage>
        <taxon>Bacteria</taxon>
        <taxon>Pseudomonadati</taxon>
        <taxon>Pseudomonadota</taxon>
        <taxon>Gammaproteobacteria</taxon>
        <taxon>Enterobacterales</taxon>
        <taxon>Enterobacteriaceae</taxon>
        <taxon>Escherichia</taxon>
    </lineage>
</organism>
<feature type="chain" id="PRO_1000194757" description="Adenylosuccinate synthetase">
    <location>
        <begin position="1"/>
        <end position="432"/>
    </location>
</feature>
<feature type="active site" description="Proton acceptor" evidence="1">
    <location>
        <position position="14"/>
    </location>
</feature>
<feature type="active site" description="Proton donor" evidence="1">
    <location>
        <position position="42"/>
    </location>
</feature>
<feature type="binding site" evidence="1">
    <location>
        <begin position="13"/>
        <end position="19"/>
    </location>
    <ligand>
        <name>GTP</name>
        <dbReference type="ChEBI" id="CHEBI:37565"/>
    </ligand>
</feature>
<feature type="binding site" description="in other chain" evidence="1">
    <location>
        <begin position="14"/>
        <end position="17"/>
    </location>
    <ligand>
        <name>IMP</name>
        <dbReference type="ChEBI" id="CHEBI:58053"/>
        <note>ligand shared between dimeric partners</note>
    </ligand>
</feature>
<feature type="binding site" evidence="1">
    <location>
        <position position="14"/>
    </location>
    <ligand>
        <name>Mg(2+)</name>
        <dbReference type="ChEBI" id="CHEBI:18420"/>
    </ligand>
</feature>
<feature type="binding site" description="in other chain" evidence="1">
    <location>
        <begin position="39"/>
        <end position="42"/>
    </location>
    <ligand>
        <name>IMP</name>
        <dbReference type="ChEBI" id="CHEBI:58053"/>
        <note>ligand shared between dimeric partners</note>
    </ligand>
</feature>
<feature type="binding site" evidence="1">
    <location>
        <begin position="41"/>
        <end position="43"/>
    </location>
    <ligand>
        <name>GTP</name>
        <dbReference type="ChEBI" id="CHEBI:37565"/>
    </ligand>
</feature>
<feature type="binding site" evidence="1">
    <location>
        <position position="41"/>
    </location>
    <ligand>
        <name>Mg(2+)</name>
        <dbReference type="ChEBI" id="CHEBI:18420"/>
    </ligand>
</feature>
<feature type="binding site" description="in other chain" evidence="1">
    <location>
        <position position="130"/>
    </location>
    <ligand>
        <name>IMP</name>
        <dbReference type="ChEBI" id="CHEBI:58053"/>
        <note>ligand shared between dimeric partners</note>
    </ligand>
</feature>
<feature type="binding site" evidence="1">
    <location>
        <position position="144"/>
    </location>
    <ligand>
        <name>IMP</name>
        <dbReference type="ChEBI" id="CHEBI:58053"/>
        <note>ligand shared between dimeric partners</note>
    </ligand>
</feature>
<feature type="binding site" description="in other chain" evidence="1">
    <location>
        <position position="225"/>
    </location>
    <ligand>
        <name>IMP</name>
        <dbReference type="ChEBI" id="CHEBI:58053"/>
        <note>ligand shared between dimeric partners</note>
    </ligand>
</feature>
<feature type="binding site" description="in other chain" evidence="1">
    <location>
        <position position="240"/>
    </location>
    <ligand>
        <name>IMP</name>
        <dbReference type="ChEBI" id="CHEBI:58053"/>
        <note>ligand shared between dimeric partners</note>
    </ligand>
</feature>
<feature type="binding site" evidence="1">
    <location>
        <begin position="300"/>
        <end position="306"/>
    </location>
    <ligand>
        <name>substrate</name>
    </ligand>
</feature>
<feature type="binding site" description="in other chain" evidence="1">
    <location>
        <position position="304"/>
    </location>
    <ligand>
        <name>IMP</name>
        <dbReference type="ChEBI" id="CHEBI:58053"/>
        <note>ligand shared between dimeric partners</note>
    </ligand>
</feature>
<feature type="binding site" evidence="1">
    <location>
        <position position="306"/>
    </location>
    <ligand>
        <name>GTP</name>
        <dbReference type="ChEBI" id="CHEBI:37565"/>
    </ligand>
</feature>
<feature type="binding site" evidence="1">
    <location>
        <begin position="332"/>
        <end position="334"/>
    </location>
    <ligand>
        <name>GTP</name>
        <dbReference type="ChEBI" id="CHEBI:37565"/>
    </ligand>
</feature>
<feature type="binding site" evidence="1">
    <location>
        <begin position="415"/>
        <end position="417"/>
    </location>
    <ligand>
        <name>GTP</name>
        <dbReference type="ChEBI" id="CHEBI:37565"/>
    </ligand>
</feature>
<evidence type="ECO:0000255" key="1">
    <source>
        <dbReference type="HAMAP-Rule" id="MF_00011"/>
    </source>
</evidence>
<proteinExistence type="inferred from homology"/>
<keyword id="KW-0963">Cytoplasm</keyword>
<keyword id="KW-0342">GTP-binding</keyword>
<keyword id="KW-0436">Ligase</keyword>
<keyword id="KW-0460">Magnesium</keyword>
<keyword id="KW-0479">Metal-binding</keyword>
<keyword id="KW-0547">Nucleotide-binding</keyword>
<keyword id="KW-0658">Purine biosynthesis</keyword>
<protein>
    <recommendedName>
        <fullName evidence="1">Adenylosuccinate synthetase</fullName>
        <shortName evidence="1">AMPSase</shortName>
        <shortName evidence="1">AdSS</shortName>
        <ecNumber evidence="1">6.3.4.4</ecNumber>
    </recommendedName>
    <alternativeName>
        <fullName evidence="1">IMP--aspartate ligase</fullName>
    </alternativeName>
</protein>
<comment type="function">
    <text evidence="1">Plays an important role in the de novo pathway of purine nucleotide biosynthesis. Catalyzes the first committed step in the biosynthesis of AMP from IMP.</text>
</comment>
<comment type="catalytic activity">
    <reaction evidence="1">
        <text>IMP + L-aspartate + GTP = N(6)-(1,2-dicarboxyethyl)-AMP + GDP + phosphate + 2 H(+)</text>
        <dbReference type="Rhea" id="RHEA:15753"/>
        <dbReference type="ChEBI" id="CHEBI:15378"/>
        <dbReference type="ChEBI" id="CHEBI:29991"/>
        <dbReference type="ChEBI" id="CHEBI:37565"/>
        <dbReference type="ChEBI" id="CHEBI:43474"/>
        <dbReference type="ChEBI" id="CHEBI:57567"/>
        <dbReference type="ChEBI" id="CHEBI:58053"/>
        <dbReference type="ChEBI" id="CHEBI:58189"/>
        <dbReference type="EC" id="6.3.4.4"/>
    </reaction>
</comment>
<comment type="cofactor">
    <cofactor evidence="1">
        <name>Mg(2+)</name>
        <dbReference type="ChEBI" id="CHEBI:18420"/>
    </cofactor>
    <text evidence="1">Binds 1 Mg(2+) ion per subunit.</text>
</comment>
<comment type="pathway">
    <text evidence="1">Purine metabolism; AMP biosynthesis via de novo pathway; AMP from IMP: step 1/2.</text>
</comment>
<comment type="subunit">
    <text evidence="1">Homodimer.</text>
</comment>
<comment type="subcellular location">
    <subcellularLocation>
        <location evidence="1">Cytoplasm</location>
    </subcellularLocation>
</comment>
<comment type="similarity">
    <text evidence="1">Belongs to the adenylosuccinate synthetase family.</text>
</comment>
<accession>B7M8T7</accession>
<reference key="1">
    <citation type="journal article" date="2009" name="PLoS Genet.">
        <title>Organised genome dynamics in the Escherichia coli species results in highly diverse adaptive paths.</title>
        <authorList>
            <person name="Touchon M."/>
            <person name="Hoede C."/>
            <person name="Tenaillon O."/>
            <person name="Barbe V."/>
            <person name="Baeriswyl S."/>
            <person name="Bidet P."/>
            <person name="Bingen E."/>
            <person name="Bonacorsi S."/>
            <person name="Bouchier C."/>
            <person name="Bouvet O."/>
            <person name="Calteau A."/>
            <person name="Chiapello H."/>
            <person name="Clermont O."/>
            <person name="Cruveiller S."/>
            <person name="Danchin A."/>
            <person name="Diard M."/>
            <person name="Dossat C."/>
            <person name="Karoui M.E."/>
            <person name="Frapy E."/>
            <person name="Garry L."/>
            <person name="Ghigo J.M."/>
            <person name="Gilles A.M."/>
            <person name="Johnson J."/>
            <person name="Le Bouguenec C."/>
            <person name="Lescat M."/>
            <person name="Mangenot S."/>
            <person name="Martinez-Jehanne V."/>
            <person name="Matic I."/>
            <person name="Nassif X."/>
            <person name="Oztas S."/>
            <person name="Petit M.A."/>
            <person name="Pichon C."/>
            <person name="Rouy Z."/>
            <person name="Ruf C.S."/>
            <person name="Schneider D."/>
            <person name="Tourret J."/>
            <person name="Vacherie B."/>
            <person name="Vallenet D."/>
            <person name="Medigue C."/>
            <person name="Rocha E.P.C."/>
            <person name="Denamur E."/>
        </authorList>
    </citation>
    <scope>NUCLEOTIDE SEQUENCE [LARGE SCALE GENOMIC DNA]</scope>
    <source>
        <strain>IAI1</strain>
    </source>
</reference>